<keyword id="KW-0963">Cytoplasm</keyword>
<keyword id="KW-0539">Nucleus</keyword>
<keyword id="KW-0597">Phosphoprotein</keyword>
<keyword id="KW-1185">Reference proteome</keyword>
<keyword id="KW-0832">Ubl conjugation</keyword>
<proteinExistence type="evidence at transcript level"/>
<sequence>MNSKGQYPTQPTYPVQPPGNPVYPQTLHLPQAPPYTDAPPAYSELYRPSFVHPGAATVPTMSAAFPGASLYLPMAQSVAVGPLGSTIPMAYYPVGPIYPPGSAVLVEGGYDAGARFGAGATTGSIPPPPPGCPPNAAQLAVMQGANVLVTQRKGNFFMGGSDGGYTIW</sequence>
<dbReference type="EMBL" id="CH474035">
    <property type="protein sequence ID" value="EDL86931.1"/>
    <property type="molecule type" value="Genomic_DNA"/>
</dbReference>
<dbReference type="EMBL" id="CH474035">
    <property type="protein sequence ID" value="EDL86932.1"/>
    <property type="molecule type" value="Genomic_DNA"/>
</dbReference>
<dbReference type="EMBL" id="BC062052">
    <property type="protein sequence ID" value="AAH62052.1"/>
    <property type="status" value="ALT_FRAME"/>
    <property type="molecule type" value="mRNA"/>
</dbReference>
<dbReference type="RefSeq" id="NP_001013125.1">
    <property type="nucleotide sequence ID" value="NM_001013107.1"/>
</dbReference>
<dbReference type="RefSeq" id="NP_001382601.1">
    <property type="nucleotide sequence ID" value="NM_001395672.1"/>
</dbReference>
<dbReference type="RefSeq" id="XP_006242384.1">
    <property type="nucleotide sequence ID" value="XM_006242322.3"/>
</dbReference>
<dbReference type="RefSeq" id="XP_038934862.1">
    <property type="nucleotide sequence ID" value="XM_039078934.2"/>
</dbReference>
<dbReference type="FunCoup" id="P60486">
    <property type="interactions" value="755"/>
</dbReference>
<dbReference type="STRING" id="10116.ENSRNOP00000006239"/>
<dbReference type="PhosphoSitePlus" id="P60486"/>
<dbReference type="PaxDb" id="10116-ENSRNOP00000006239"/>
<dbReference type="Ensembl" id="ENSRNOT00000006239.8">
    <property type="protein sequence ID" value="ENSRNOP00000006239.6"/>
    <property type="gene ID" value="ENSRNOG00000004628.8"/>
</dbReference>
<dbReference type="GeneID" id="300235"/>
<dbReference type="AGR" id="RGD:1307407"/>
<dbReference type="RGD" id="1307407">
    <property type="gene designation" value="Dazap2"/>
</dbReference>
<dbReference type="eggNOG" id="ENOG502QTNQ">
    <property type="taxonomic scope" value="Eukaryota"/>
</dbReference>
<dbReference type="GeneTree" id="ENSGT00390000000685"/>
<dbReference type="HOGENOM" id="CLU_135110_0_0_1"/>
<dbReference type="InParanoid" id="P60486"/>
<dbReference type="OMA" id="IYQPRYM"/>
<dbReference type="OrthoDB" id="6514304at2759"/>
<dbReference type="PhylomeDB" id="P60486"/>
<dbReference type="PRO" id="PR:P60486"/>
<dbReference type="Proteomes" id="UP000002494">
    <property type="component" value="Chromosome 7"/>
</dbReference>
<dbReference type="Proteomes" id="UP000234681">
    <property type="component" value="Chromosome 7"/>
</dbReference>
<dbReference type="Bgee" id="ENSRNOG00000004628">
    <property type="expression patterns" value="Expressed in spleen and 19 other cell types or tissues"/>
</dbReference>
<dbReference type="GO" id="GO:0005737">
    <property type="term" value="C:cytoplasm"/>
    <property type="evidence" value="ECO:0000250"/>
    <property type="project" value="UniProtKB"/>
</dbReference>
<dbReference type="GO" id="GO:0010494">
    <property type="term" value="C:cytoplasmic stress granule"/>
    <property type="evidence" value="ECO:0000250"/>
    <property type="project" value="UniProtKB"/>
</dbReference>
<dbReference type="GO" id="GO:0016604">
    <property type="term" value="C:nuclear body"/>
    <property type="evidence" value="ECO:0000250"/>
    <property type="project" value="UniProtKB"/>
</dbReference>
<dbReference type="GO" id="GO:0016607">
    <property type="term" value="C:nuclear speck"/>
    <property type="evidence" value="ECO:0000250"/>
    <property type="project" value="UniProtKB"/>
</dbReference>
<dbReference type="GO" id="GO:0005634">
    <property type="term" value="C:nucleus"/>
    <property type="evidence" value="ECO:0000250"/>
    <property type="project" value="UniProtKB"/>
</dbReference>
<dbReference type="GO" id="GO:0032991">
    <property type="term" value="C:protein-containing complex"/>
    <property type="evidence" value="ECO:0000266"/>
    <property type="project" value="RGD"/>
</dbReference>
<dbReference type="GO" id="GO:0140297">
    <property type="term" value="F:DNA-binding transcription factor binding"/>
    <property type="evidence" value="ECO:0000266"/>
    <property type="project" value="RGD"/>
</dbReference>
<dbReference type="GO" id="GO:0042802">
    <property type="term" value="F:identical protein binding"/>
    <property type="evidence" value="ECO:0000266"/>
    <property type="project" value="RGD"/>
</dbReference>
<dbReference type="GO" id="GO:0031435">
    <property type="term" value="F:mitogen-activated protein kinase kinase kinase binding"/>
    <property type="evidence" value="ECO:0000266"/>
    <property type="project" value="RGD"/>
</dbReference>
<dbReference type="GO" id="GO:0002039">
    <property type="term" value="F:p53 binding"/>
    <property type="evidence" value="ECO:0000250"/>
    <property type="project" value="UniProtKB"/>
</dbReference>
<dbReference type="GO" id="GO:0043539">
    <property type="term" value="F:protein serine/threonine kinase activator activity"/>
    <property type="evidence" value="ECO:0000266"/>
    <property type="project" value="RGD"/>
</dbReference>
<dbReference type="GO" id="GO:0120283">
    <property type="term" value="F:protein serine/threonine kinase binding"/>
    <property type="evidence" value="ECO:0000250"/>
    <property type="project" value="UniProtKB"/>
</dbReference>
<dbReference type="GO" id="GO:0030971">
    <property type="term" value="F:receptor tyrosine kinase binding"/>
    <property type="evidence" value="ECO:0000266"/>
    <property type="project" value="RGD"/>
</dbReference>
<dbReference type="GO" id="GO:0031625">
    <property type="term" value="F:ubiquitin protein ligase binding"/>
    <property type="evidence" value="ECO:0000250"/>
    <property type="project" value="UniProtKB"/>
</dbReference>
<dbReference type="GO" id="GO:0050699">
    <property type="term" value="F:WW domain binding"/>
    <property type="evidence" value="ECO:0000266"/>
    <property type="project" value="RGD"/>
</dbReference>
<dbReference type="GO" id="GO:1905636">
    <property type="term" value="P:positive regulation of RNA polymerase II regulatory region sequence-specific DNA binding"/>
    <property type="evidence" value="ECO:0000250"/>
    <property type="project" value="UniProtKB"/>
</dbReference>
<dbReference type="GO" id="GO:0031648">
    <property type="term" value="P:protein destabilization"/>
    <property type="evidence" value="ECO:0000250"/>
    <property type="project" value="UniProtKB"/>
</dbReference>
<dbReference type="GO" id="GO:0034063">
    <property type="term" value="P:stress granule assembly"/>
    <property type="evidence" value="ECO:0000250"/>
    <property type="project" value="UniProtKB"/>
</dbReference>
<dbReference type="InterPro" id="IPR022730">
    <property type="entry name" value="DAZ_assoc-2"/>
</dbReference>
<dbReference type="PANTHER" id="PTHR31638">
    <property type="entry name" value="DAZ-ASSOCIATED PROTEIN 2"/>
    <property type="match status" value="1"/>
</dbReference>
<dbReference type="PANTHER" id="PTHR31638:SF3">
    <property type="entry name" value="DAZ-ASSOCIATED PROTEIN 2"/>
    <property type="match status" value="1"/>
</dbReference>
<dbReference type="Pfam" id="PF11029">
    <property type="entry name" value="DAZAP2"/>
    <property type="match status" value="1"/>
</dbReference>
<reference key="1">
    <citation type="journal article" date="2004" name="Nature">
        <title>Genome sequence of the Brown Norway rat yields insights into mammalian evolution.</title>
        <authorList>
            <person name="Gibbs R.A."/>
            <person name="Weinstock G.M."/>
            <person name="Metzker M.L."/>
            <person name="Muzny D.M."/>
            <person name="Sodergren E.J."/>
            <person name="Scherer S."/>
            <person name="Scott G."/>
            <person name="Steffen D."/>
            <person name="Worley K.C."/>
            <person name="Burch P.E."/>
            <person name="Okwuonu G."/>
            <person name="Hines S."/>
            <person name="Lewis L."/>
            <person name="Deramo C."/>
            <person name="Delgado O."/>
            <person name="Dugan-Rocha S."/>
            <person name="Miner G."/>
            <person name="Morgan M."/>
            <person name="Hawes A."/>
            <person name="Gill R."/>
            <person name="Holt R.A."/>
            <person name="Adams M.D."/>
            <person name="Amanatides P.G."/>
            <person name="Baden-Tillson H."/>
            <person name="Barnstead M."/>
            <person name="Chin S."/>
            <person name="Evans C.A."/>
            <person name="Ferriera S."/>
            <person name="Fosler C."/>
            <person name="Glodek A."/>
            <person name="Gu Z."/>
            <person name="Jennings D."/>
            <person name="Kraft C.L."/>
            <person name="Nguyen T."/>
            <person name="Pfannkoch C.M."/>
            <person name="Sitter C."/>
            <person name="Sutton G.G."/>
            <person name="Venter J.C."/>
            <person name="Woodage T."/>
            <person name="Smith D."/>
            <person name="Lee H.-M."/>
            <person name="Gustafson E."/>
            <person name="Cahill P."/>
            <person name="Kana A."/>
            <person name="Doucette-Stamm L."/>
            <person name="Weinstock K."/>
            <person name="Fechtel K."/>
            <person name="Weiss R.B."/>
            <person name="Dunn D.M."/>
            <person name="Green E.D."/>
            <person name="Blakesley R.W."/>
            <person name="Bouffard G.G."/>
            <person name="De Jong P.J."/>
            <person name="Osoegawa K."/>
            <person name="Zhu B."/>
            <person name="Marra M."/>
            <person name="Schein J."/>
            <person name="Bosdet I."/>
            <person name="Fjell C."/>
            <person name="Jones S."/>
            <person name="Krzywinski M."/>
            <person name="Mathewson C."/>
            <person name="Siddiqui A."/>
            <person name="Wye N."/>
            <person name="McPherson J."/>
            <person name="Zhao S."/>
            <person name="Fraser C.M."/>
            <person name="Shetty J."/>
            <person name="Shatsman S."/>
            <person name="Geer K."/>
            <person name="Chen Y."/>
            <person name="Abramzon S."/>
            <person name="Nierman W.C."/>
            <person name="Havlak P.H."/>
            <person name="Chen R."/>
            <person name="Durbin K.J."/>
            <person name="Egan A."/>
            <person name="Ren Y."/>
            <person name="Song X.-Z."/>
            <person name="Li B."/>
            <person name="Liu Y."/>
            <person name="Qin X."/>
            <person name="Cawley S."/>
            <person name="Cooney A.J."/>
            <person name="D'Souza L.M."/>
            <person name="Martin K."/>
            <person name="Wu J.Q."/>
            <person name="Gonzalez-Garay M.L."/>
            <person name="Jackson A.R."/>
            <person name="Kalafus K.J."/>
            <person name="McLeod M.P."/>
            <person name="Milosavljevic A."/>
            <person name="Virk D."/>
            <person name="Volkov A."/>
            <person name="Wheeler D.A."/>
            <person name="Zhang Z."/>
            <person name="Bailey J.A."/>
            <person name="Eichler E.E."/>
            <person name="Tuzun E."/>
            <person name="Birney E."/>
            <person name="Mongin E."/>
            <person name="Ureta-Vidal A."/>
            <person name="Woodwark C."/>
            <person name="Zdobnov E."/>
            <person name="Bork P."/>
            <person name="Suyama M."/>
            <person name="Torrents D."/>
            <person name="Alexandersson M."/>
            <person name="Trask B.J."/>
            <person name="Young J.M."/>
            <person name="Huang H."/>
            <person name="Wang H."/>
            <person name="Xing H."/>
            <person name="Daniels S."/>
            <person name="Gietzen D."/>
            <person name="Schmidt J."/>
            <person name="Stevens K."/>
            <person name="Vitt U."/>
            <person name="Wingrove J."/>
            <person name="Camara F."/>
            <person name="Mar Alba M."/>
            <person name="Abril J.F."/>
            <person name="Guigo R."/>
            <person name="Smit A."/>
            <person name="Dubchak I."/>
            <person name="Rubin E.M."/>
            <person name="Couronne O."/>
            <person name="Poliakov A."/>
            <person name="Huebner N."/>
            <person name="Ganten D."/>
            <person name="Goesele C."/>
            <person name="Hummel O."/>
            <person name="Kreitler T."/>
            <person name="Lee Y.-A."/>
            <person name="Monti J."/>
            <person name="Schulz H."/>
            <person name="Zimdahl H."/>
            <person name="Himmelbauer H."/>
            <person name="Lehrach H."/>
            <person name="Jacob H.J."/>
            <person name="Bromberg S."/>
            <person name="Gullings-Handley J."/>
            <person name="Jensen-Seaman M.I."/>
            <person name="Kwitek A.E."/>
            <person name="Lazar J."/>
            <person name="Pasko D."/>
            <person name="Tonellato P.J."/>
            <person name="Twigger S."/>
            <person name="Ponting C.P."/>
            <person name="Duarte J.M."/>
            <person name="Rice S."/>
            <person name="Goodstadt L."/>
            <person name="Beatson S.A."/>
            <person name="Emes R.D."/>
            <person name="Winter E.E."/>
            <person name="Webber C."/>
            <person name="Brandt P."/>
            <person name="Nyakatura G."/>
            <person name="Adetobi M."/>
            <person name="Chiaromonte F."/>
            <person name="Elnitski L."/>
            <person name="Eswara P."/>
            <person name="Hardison R.C."/>
            <person name="Hou M."/>
            <person name="Kolbe D."/>
            <person name="Makova K."/>
            <person name="Miller W."/>
            <person name="Nekrutenko A."/>
            <person name="Riemer C."/>
            <person name="Schwartz S."/>
            <person name="Taylor J."/>
            <person name="Yang S."/>
            <person name="Zhang Y."/>
            <person name="Lindpaintner K."/>
            <person name="Andrews T.D."/>
            <person name="Caccamo M."/>
            <person name="Clamp M."/>
            <person name="Clarke L."/>
            <person name="Curwen V."/>
            <person name="Durbin R.M."/>
            <person name="Eyras E."/>
            <person name="Searle S.M."/>
            <person name="Cooper G.M."/>
            <person name="Batzoglou S."/>
            <person name="Brudno M."/>
            <person name="Sidow A."/>
            <person name="Stone E.A."/>
            <person name="Payseur B.A."/>
            <person name="Bourque G."/>
            <person name="Lopez-Otin C."/>
            <person name="Puente X.S."/>
            <person name="Chakrabarti K."/>
            <person name="Chatterji S."/>
            <person name="Dewey C."/>
            <person name="Pachter L."/>
            <person name="Bray N."/>
            <person name="Yap V.B."/>
            <person name="Caspi A."/>
            <person name="Tesler G."/>
            <person name="Pevzner P.A."/>
            <person name="Haussler D."/>
            <person name="Roskin K.M."/>
            <person name="Baertsch R."/>
            <person name="Clawson H."/>
            <person name="Furey T.S."/>
            <person name="Hinrichs A.S."/>
            <person name="Karolchik D."/>
            <person name="Kent W.J."/>
            <person name="Rosenbloom K.R."/>
            <person name="Trumbower H."/>
            <person name="Weirauch M."/>
            <person name="Cooper D.N."/>
            <person name="Stenson P.D."/>
            <person name="Ma B."/>
            <person name="Brent M."/>
            <person name="Arumugam M."/>
            <person name="Shteynberg D."/>
            <person name="Copley R.R."/>
            <person name="Taylor M.S."/>
            <person name="Riethman H."/>
            <person name="Mudunuri U."/>
            <person name="Peterson J."/>
            <person name="Guyer M."/>
            <person name="Felsenfeld A."/>
            <person name="Old S."/>
            <person name="Mockrin S."/>
            <person name="Collins F.S."/>
        </authorList>
    </citation>
    <scope>NUCLEOTIDE SEQUENCE [LARGE SCALE GENOMIC DNA]</scope>
    <source>
        <strain>Brown Norway</strain>
    </source>
</reference>
<reference key="2">
    <citation type="submission" date="2005-09" db="EMBL/GenBank/DDBJ databases">
        <authorList>
            <person name="Mural R.J."/>
            <person name="Adams M.D."/>
            <person name="Myers E.W."/>
            <person name="Smith H.O."/>
            <person name="Venter J.C."/>
        </authorList>
    </citation>
    <scope>NUCLEOTIDE SEQUENCE [LARGE SCALE GENOMIC DNA]</scope>
</reference>
<reference key="3">
    <citation type="journal article" date="2004" name="Genome Res.">
        <title>The status, quality, and expansion of the NIH full-length cDNA project: the Mammalian Gene Collection (MGC).</title>
        <authorList>
            <consortium name="The MGC Project Team"/>
        </authorList>
    </citation>
    <scope>NUCLEOTIDE SEQUENCE [LARGE SCALE MRNA]</scope>
    <source>
        <tissue>Prostate</tissue>
    </source>
</reference>
<comment type="function">
    <text evidence="1 2">In unstressed cells, promotes SIAH1-mediated polyubiquitination and degradation of the serine/threonine-protein kinase HIPK2, probably by acting as a loading factor that potentiates complex formation between HIPK2 and ubiquitin ligase SIAH1 (By similarity). In response to DNA damage, localizes to the nucleus following phosphorylation by HIPK2 and modulates the expression of a subset of TP53/p53 target genes by binding to TP53 at target gene promoters (By similarity). This limits the expression of a number of cell death-mediating TP53 target genes, reducing DNA damage-induced cell death (By similarity). Enhances the binding of transcription factor TCF7L2/TCF4, a Wnt signaling pathway effector, to the promoters of target genes (By similarity). Plays a role in stress granule formation (By similarity).</text>
</comment>
<comment type="subunit">
    <text evidence="1 2">Interacts with SOX6. Interacts with DAZ1 and DAZL. Interacts with IL17RB. May interact with FAM168B. Interacts with INCA1. Interacts with EIF4G1 and EIF4G2 (By similarity). Interacts (via PPAY motif) with NEDD4 (via WW domains) (By similarity). Interacts with transcription factor TCF4; the interaction results in localization of DAZAP2 to the nucleus (By similarity). Interacts with transcription factors TCF7 and TCF7L1 (By similarity). Interacts with transcription factor LEF1 (By similarity). Interacts with serine/threonine-protein kinase HIPK2; the interaction results in phosphorylation of DAZAP2 which causes localization of DAZAP2 to the nucleus, reduces interaction of DAZAP2 with HIPK2 and prevents DAZAP2-dependent degradation of HIPK2 (By similarity). Interacts with ubiquitin ligase SIAH1; the interaction is decreased following phosphorylation of DAZAP2 by HIPK2 (By similarity). Interacts with TP53; the interaction is triggered by DNA damage (By similarity).</text>
</comment>
<comment type="subcellular location">
    <subcellularLocation>
        <location evidence="1">Cytoplasm</location>
    </subcellularLocation>
    <subcellularLocation>
        <location evidence="1">Nucleus</location>
    </subcellularLocation>
    <subcellularLocation>
        <location evidence="1">Nucleus speckle</location>
    </subcellularLocation>
    <subcellularLocation>
        <location evidence="1">Nucleus</location>
        <location evidence="1">Nuclear body</location>
    </subcellularLocation>
    <subcellularLocation>
        <location evidence="1">Cytoplasm</location>
        <location evidence="1">Stress granule</location>
    </subcellularLocation>
    <text evidence="1">Predominantly nuclear in macrophages, stimulation of IL17RB with its ligand IL17E induces accumulation in the cytoplasm (By similarity). Predominantly cytoplasmic when unphosphorylated and localizes to the nucleus following phosphorylation by HIPK2 (By similarity). Localizes to stress granules under cellular stress conditions (By similarity).</text>
</comment>
<comment type="PTM">
    <text evidence="1">Ubiquitinated by SMURF2, leading to proteasomal degradation. Ubiquitinated by NEDD4, leading to proteasomal degradation.</text>
</comment>
<comment type="PTM">
    <text evidence="1">Following DNA damage, phosphorylated by HIPK2 which promotes DAZAP2 localization to the nucleus, reduces interaction of DAZAP2 with HIPK2 and SIAH1, and prevents DAZAP2-dependent ubiquitination of HIPK2 by E3 ubiquitin-protein ligase SIAH1 and subsequent HIPK2 proteasomal degradation.</text>
</comment>
<comment type="sequence caution" evidence="4">
    <conflict type="frameshift">
        <sequence resource="EMBL-CDS" id="AAH62052"/>
    </conflict>
</comment>
<gene>
    <name evidence="1" type="primary">Dazap2</name>
    <name evidence="1" type="synonym">Prtb</name>
</gene>
<feature type="chain" id="PRO_0000079790" description="DAZ-associated protein 2">
    <location>
        <begin position="1"/>
        <end position="168"/>
    </location>
</feature>
<feature type="region of interest" description="Disordered" evidence="3">
    <location>
        <begin position="1"/>
        <end position="25"/>
    </location>
</feature>
<feature type="short sequence motif" description="PPAY" evidence="1">
    <location>
        <begin position="39"/>
        <end position="42"/>
    </location>
</feature>
<feature type="compositionally biased region" description="Low complexity" evidence="3">
    <location>
        <begin position="1"/>
        <end position="13"/>
    </location>
</feature>
<feature type="modified residue" description="Phosphoserine" evidence="1">
    <location>
        <position position="77"/>
    </location>
</feature>
<name>DAZP2_RAT</name>
<organism>
    <name type="scientific">Rattus norvegicus</name>
    <name type="common">Rat</name>
    <dbReference type="NCBI Taxonomy" id="10116"/>
    <lineage>
        <taxon>Eukaryota</taxon>
        <taxon>Metazoa</taxon>
        <taxon>Chordata</taxon>
        <taxon>Craniata</taxon>
        <taxon>Vertebrata</taxon>
        <taxon>Euteleostomi</taxon>
        <taxon>Mammalia</taxon>
        <taxon>Eutheria</taxon>
        <taxon>Euarchontoglires</taxon>
        <taxon>Glires</taxon>
        <taxon>Rodentia</taxon>
        <taxon>Myomorpha</taxon>
        <taxon>Muroidea</taxon>
        <taxon>Muridae</taxon>
        <taxon>Murinae</taxon>
        <taxon>Rattus</taxon>
    </lineage>
</organism>
<evidence type="ECO:0000250" key="1">
    <source>
        <dbReference type="UniProtKB" id="Q15038"/>
    </source>
</evidence>
<evidence type="ECO:0000250" key="2">
    <source>
        <dbReference type="UniProtKB" id="Q9DCP9"/>
    </source>
</evidence>
<evidence type="ECO:0000256" key="3">
    <source>
        <dbReference type="SAM" id="MobiDB-lite"/>
    </source>
</evidence>
<evidence type="ECO:0000305" key="4"/>
<protein>
    <recommendedName>
        <fullName evidence="1">DAZ-associated protein 2</fullName>
    </recommendedName>
    <alternativeName>
        <fullName>Deleted in azoospermia-associated protein 2</fullName>
    </alternativeName>
    <alternativeName>
        <fullName evidence="1">Proline-rich transcript in brain protein</fullName>
    </alternativeName>
</protein>
<accession>P60486</accession>
<accession>A0A0H2UHD1</accession>